<name>FIS_SALSV</name>
<evidence type="ECO:0000255" key="1">
    <source>
        <dbReference type="HAMAP-Rule" id="MF_00166"/>
    </source>
</evidence>
<protein>
    <recommendedName>
        <fullName evidence="1">DNA-binding protein Fis</fullName>
    </recommendedName>
</protein>
<keyword id="KW-0010">Activator</keyword>
<keyword id="KW-0238">DNA-binding</keyword>
<keyword id="KW-0804">Transcription</keyword>
<keyword id="KW-0805">Transcription regulation</keyword>
<reference key="1">
    <citation type="journal article" date="2011" name="J. Bacteriol.">
        <title>Comparative genomics of 28 Salmonella enterica isolates: evidence for CRISPR-mediated adaptive sublineage evolution.</title>
        <authorList>
            <person name="Fricke W.F."/>
            <person name="Mammel M.K."/>
            <person name="McDermott P.F."/>
            <person name="Tartera C."/>
            <person name="White D.G."/>
            <person name="Leclerc J.E."/>
            <person name="Ravel J."/>
            <person name="Cebula T.A."/>
        </authorList>
    </citation>
    <scope>NUCLEOTIDE SEQUENCE [LARGE SCALE GENOMIC DNA]</scope>
    <source>
        <strain>CVM19633</strain>
    </source>
</reference>
<dbReference type="EMBL" id="CP001127">
    <property type="protein sequence ID" value="ACF92545.1"/>
    <property type="molecule type" value="Genomic_DNA"/>
</dbReference>
<dbReference type="RefSeq" id="WP_000462905.1">
    <property type="nucleotide sequence ID" value="NC_011094.1"/>
</dbReference>
<dbReference type="SMR" id="B4TX93"/>
<dbReference type="GeneID" id="98390389"/>
<dbReference type="KEGG" id="sew:SeSA_A3577"/>
<dbReference type="HOGENOM" id="CLU_158040_3_0_6"/>
<dbReference type="Proteomes" id="UP000001865">
    <property type="component" value="Chromosome"/>
</dbReference>
<dbReference type="GO" id="GO:0003700">
    <property type="term" value="F:DNA-binding transcription factor activity"/>
    <property type="evidence" value="ECO:0007669"/>
    <property type="project" value="UniProtKB-UniRule"/>
</dbReference>
<dbReference type="GO" id="GO:0043565">
    <property type="term" value="F:sequence-specific DNA binding"/>
    <property type="evidence" value="ECO:0007669"/>
    <property type="project" value="InterPro"/>
</dbReference>
<dbReference type="FunFam" id="1.10.10.60:FF:000006">
    <property type="entry name" value="DNA-binding protein Fis"/>
    <property type="match status" value="1"/>
</dbReference>
<dbReference type="Gene3D" id="1.10.10.60">
    <property type="entry name" value="Homeodomain-like"/>
    <property type="match status" value="1"/>
</dbReference>
<dbReference type="HAMAP" id="MF_00166">
    <property type="entry name" value="DNA_binding_Fis"/>
    <property type="match status" value="1"/>
</dbReference>
<dbReference type="InterPro" id="IPR005412">
    <property type="entry name" value="Fis_DNA-bd"/>
</dbReference>
<dbReference type="InterPro" id="IPR009057">
    <property type="entry name" value="Homeodomain-like_sf"/>
</dbReference>
<dbReference type="InterPro" id="IPR002197">
    <property type="entry name" value="HTH_Fis"/>
</dbReference>
<dbReference type="InterPro" id="IPR050207">
    <property type="entry name" value="Trans_regulatory_Fis"/>
</dbReference>
<dbReference type="NCBIfam" id="NF001659">
    <property type="entry name" value="PRK00430.1"/>
    <property type="match status" value="1"/>
</dbReference>
<dbReference type="PANTHER" id="PTHR47918">
    <property type="entry name" value="DNA-BINDING PROTEIN FIS"/>
    <property type="match status" value="1"/>
</dbReference>
<dbReference type="PANTHER" id="PTHR47918:SF1">
    <property type="entry name" value="DNA-BINDING PROTEIN FIS"/>
    <property type="match status" value="1"/>
</dbReference>
<dbReference type="Pfam" id="PF02954">
    <property type="entry name" value="HTH_8"/>
    <property type="match status" value="1"/>
</dbReference>
<dbReference type="PIRSF" id="PIRSF002097">
    <property type="entry name" value="DNA-binding_Fis"/>
    <property type="match status" value="1"/>
</dbReference>
<dbReference type="PRINTS" id="PR01591">
    <property type="entry name" value="DNABINDNGFIS"/>
</dbReference>
<dbReference type="PRINTS" id="PR01590">
    <property type="entry name" value="HTHFIS"/>
</dbReference>
<dbReference type="SUPFAM" id="SSF46689">
    <property type="entry name" value="Homeodomain-like"/>
    <property type="match status" value="1"/>
</dbReference>
<feature type="chain" id="PRO_1000097464" description="DNA-binding protein Fis">
    <location>
        <begin position="1"/>
        <end position="98"/>
    </location>
</feature>
<feature type="DNA-binding region" description="H-T-H motif" evidence="1">
    <location>
        <begin position="74"/>
        <end position="93"/>
    </location>
</feature>
<organism>
    <name type="scientific">Salmonella schwarzengrund (strain CVM19633)</name>
    <dbReference type="NCBI Taxonomy" id="439843"/>
    <lineage>
        <taxon>Bacteria</taxon>
        <taxon>Pseudomonadati</taxon>
        <taxon>Pseudomonadota</taxon>
        <taxon>Gammaproteobacteria</taxon>
        <taxon>Enterobacterales</taxon>
        <taxon>Enterobacteriaceae</taxon>
        <taxon>Salmonella</taxon>
    </lineage>
</organism>
<proteinExistence type="inferred from homology"/>
<sequence length="98" mass="11240">MFEQRVNSDVLTVSTVNSQDQVTQKPLRDSVKQALKNYFAQLNGQDVNDLYELVLAEVEQPLLDMVMQYTRGNQTRAALMMGINRGTLRKKLKKYGMN</sequence>
<gene>
    <name evidence="1" type="primary">fis</name>
    <name type="ordered locus">SeSA_A3577</name>
</gene>
<accession>B4TX93</accession>
<comment type="function">
    <text evidence="1">Activates ribosomal RNA transcription. Plays a direct role in upstream activation of rRNA promoters.</text>
</comment>
<comment type="subunit">
    <text evidence="1">Homodimer.</text>
</comment>
<comment type="similarity">
    <text evidence="1">Belongs to the transcriptional regulatory Fis family.</text>
</comment>